<comment type="function">
    <text evidence="1">Catalyzes the dephosphorylation of undecaprenyl diphosphate (UPP). Confers resistance to bacitracin.</text>
</comment>
<comment type="catalytic activity">
    <reaction evidence="1">
        <text>di-trans,octa-cis-undecaprenyl diphosphate + H2O = di-trans,octa-cis-undecaprenyl phosphate + phosphate + H(+)</text>
        <dbReference type="Rhea" id="RHEA:28094"/>
        <dbReference type="ChEBI" id="CHEBI:15377"/>
        <dbReference type="ChEBI" id="CHEBI:15378"/>
        <dbReference type="ChEBI" id="CHEBI:43474"/>
        <dbReference type="ChEBI" id="CHEBI:58405"/>
        <dbReference type="ChEBI" id="CHEBI:60392"/>
        <dbReference type="EC" id="3.6.1.27"/>
    </reaction>
</comment>
<comment type="subcellular location">
    <subcellularLocation>
        <location evidence="1">Cell inner membrane</location>
        <topology evidence="1">Multi-pass membrane protein</topology>
    </subcellularLocation>
</comment>
<comment type="miscellaneous">
    <text>Bacitracin is thought to be involved in the inhibition of peptidoglycan synthesis by sequestering undecaprenyl diphosphate, thereby reducing the pool of lipid carrier available.</text>
</comment>
<comment type="similarity">
    <text evidence="1">Belongs to the UppP family.</text>
</comment>
<sequence>MPDWLIALILGLIEGLTEFIPVSSTGHLLLLGHFLGFHSPGNTFQVLIQLGAILAITGVYFGRLWGLLTTLPTEPGSRRFVIGILLAFLPAVFVGVAAHDFIKTVLYETPALVCSTLIIGGFILLALDRMKLEPRYTDVAEYPLKTAFIIGLFQCLALVPGVSRSGATIAGALLLKCDKRSAAEFSFFLAMPTMAGAFAYDLYKNIDKLSTNDLGLIGIGFLAALVSGVFVVKTVLDFITRHGFAPFAYWRIAVGVVGLALLYIPR</sequence>
<dbReference type="EC" id="3.6.1.27" evidence="1"/>
<dbReference type="EMBL" id="CP001340">
    <property type="protein sequence ID" value="ACL97184.1"/>
    <property type="molecule type" value="Genomic_DNA"/>
</dbReference>
<dbReference type="RefSeq" id="WP_010921432.1">
    <property type="nucleotide sequence ID" value="NC_011916.1"/>
</dbReference>
<dbReference type="RefSeq" id="YP_002519092.1">
    <property type="nucleotide sequence ID" value="NC_011916.1"/>
</dbReference>
<dbReference type="SMR" id="B8H6C3"/>
<dbReference type="GeneID" id="7331915"/>
<dbReference type="KEGG" id="ccs:CCNA_03719"/>
<dbReference type="PATRIC" id="fig|565050.3.peg.3626"/>
<dbReference type="HOGENOM" id="CLU_060296_2_0_5"/>
<dbReference type="OrthoDB" id="9808289at2"/>
<dbReference type="PhylomeDB" id="B8H6C3"/>
<dbReference type="Proteomes" id="UP000001364">
    <property type="component" value="Chromosome"/>
</dbReference>
<dbReference type="GO" id="GO:0005886">
    <property type="term" value="C:plasma membrane"/>
    <property type="evidence" value="ECO:0007669"/>
    <property type="project" value="UniProtKB-SubCell"/>
</dbReference>
<dbReference type="GO" id="GO:0050380">
    <property type="term" value="F:undecaprenyl-diphosphatase activity"/>
    <property type="evidence" value="ECO:0007669"/>
    <property type="project" value="UniProtKB-UniRule"/>
</dbReference>
<dbReference type="GO" id="GO:0071555">
    <property type="term" value="P:cell wall organization"/>
    <property type="evidence" value="ECO:0007669"/>
    <property type="project" value="UniProtKB-KW"/>
</dbReference>
<dbReference type="GO" id="GO:0009252">
    <property type="term" value="P:peptidoglycan biosynthetic process"/>
    <property type="evidence" value="ECO:0007669"/>
    <property type="project" value="UniProtKB-KW"/>
</dbReference>
<dbReference type="GO" id="GO:0008360">
    <property type="term" value="P:regulation of cell shape"/>
    <property type="evidence" value="ECO:0007669"/>
    <property type="project" value="UniProtKB-KW"/>
</dbReference>
<dbReference type="GO" id="GO:0046677">
    <property type="term" value="P:response to antibiotic"/>
    <property type="evidence" value="ECO:0007669"/>
    <property type="project" value="UniProtKB-UniRule"/>
</dbReference>
<dbReference type="HAMAP" id="MF_01006">
    <property type="entry name" value="Undec_diphosphatase"/>
    <property type="match status" value="1"/>
</dbReference>
<dbReference type="InterPro" id="IPR003824">
    <property type="entry name" value="UppP"/>
</dbReference>
<dbReference type="NCBIfam" id="NF001389">
    <property type="entry name" value="PRK00281.1-2"/>
    <property type="match status" value="1"/>
</dbReference>
<dbReference type="NCBIfam" id="NF001390">
    <property type="entry name" value="PRK00281.1-4"/>
    <property type="match status" value="1"/>
</dbReference>
<dbReference type="NCBIfam" id="TIGR00753">
    <property type="entry name" value="undec_PP_bacA"/>
    <property type="match status" value="1"/>
</dbReference>
<dbReference type="PANTHER" id="PTHR30622">
    <property type="entry name" value="UNDECAPRENYL-DIPHOSPHATASE"/>
    <property type="match status" value="1"/>
</dbReference>
<dbReference type="PANTHER" id="PTHR30622:SF3">
    <property type="entry name" value="UNDECAPRENYL-DIPHOSPHATASE"/>
    <property type="match status" value="1"/>
</dbReference>
<dbReference type="Pfam" id="PF02673">
    <property type="entry name" value="BacA"/>
    <property type="match status" value="1"/>
</dbReference>
<evidence type="ECO:0000255" key="1">
    <source>
        <dbReference type="HAMAP-Rule" id="MF_01006"/>
    </source>
</evidence>
<name>UPPP_CAUVN</name>
<proteinExistence type="inferred from homology"/>
<feature type="chain" id="PRO_1000148806" description="Undecaprenyl-diphosphatase">
    <location>
        <begin position="1"/>
        <end position="266"/>
    </location>
</feature>
<feature type="transmembrane region" description="Helical" evidence="1">
    <location>
        <begin position="4"/>
        <end position="24"/>
    </location>
</feature>
<feature type="transmembrane region" description="Helical" evidence="1">
    <location>
        <begin position="46"/>
        <end position="66"/>
    </location>
</feature>
<feature type="transmembrane region" description="Helical" evidence="1">
    <location>
        <begin position="82"/>
        <end position="102"/>
    </location>
</feature>
<feature type="transmembrane region" description="Helical" evidence="1">
    <location>
        <begin position="105"/>
        <end position="125"/>
    </location>
</feature>
<feature type="transmembrane region" description="Helical" evidence="1">
    <location>
        <begin position="142"/>
        <end position="162"/>
    </location>
</feature>
<feature type="transmembrane region" description="Helical" evidence="1">
    <location>
        <begin position="182"/>
        <end position="202"/>
    </location>
</feature>
<feature type="transmembrane region" description="Helical" evidence="1">
    <location>
        <begin position="216"/>
        <end position="236"/>
    </location>
</feature>
<feature type="transmembrane region" description="Helical" evidence="1">
    <location>
        <begin position="244"/>
        <end position="264"/>
    </location>
</feature>
<reference key="1">
    <citation type="journal article" date="2010" name="J. Bacteriol.">
        <title>The genetic basis of laboratory adaptation in Caulobacter crescentus.</title>
        <authorList>
            <person name="Marks M.E."/>
            <person name="Castro-Rojas C.M."/>
            <person name="Teiling C."/>
            <person name="Du L."/>
            <person name="Kapatral V."/>
            <person name="Walunas T.L."/>
            <person name="Crosson S."/>
        </authorList>
    </citation>
    <scope>NUCLEOTIDE SEQUENCE [LARGE SCALE GENOMIC DNA]</scope>
    <source>
        <strain>NA1000 / CB15N</strain>
    </source>
</reference>
<protein>
    <recommendedName>
        <fullName evidence="1">Undecaprenyl-diphosphatase</fullName>
        <ecNumber evidence="1">3.6.1.27</ecNumber>
    </recommendedName>
    <alternativeName>
        <fullName evidence="1">Bacitracin resistance protein</fullName>
    </alternativeName>
    <alternativeName>
        <fullName evidence="1">Undecaprenyl pyrophosphate phosphatase</fullName>
    </alternativeName>
</protein>
<keyword id="KW-0046">Antibiotic resistance</keyword>
<keyword id="KW-0997">Cell inner membrane</keyword>
<keyword id="KW-1003">Cell membrane</keyword>
<keyword id="KW-0133">Cell shape</keyword>
<keyword id="KW-0961">Cell wall biogenesis/degradation</keyword>
<keyword id="KW-0378">Hydrolase</keyword>
<keyword id="KW-0472">Membrane</keyword>
<keyword id="KW-0573">Peptidoglycan synthesis</keyword>
<keyword id="KW-1185">Reference proteome</keyword>
<keyword id="KW-0812">Transmembrane</keyword>
<keyword id="KW-1133">Transmembrane helix</keyword>
<accession>B8H6C3</accession>
<gene>
    <name evidence="1" type="primary">uppP</name>
    <name type="ordered locus">CCNA_03719</name>
</gene>
<organism>
    <name type="scientific">Caulobacter vibrioides (strain NA1000 / CB15N)</name>
    <name type="common">Caulobacter crescentus</name>
    <dbReference type="NCBI Taxonomy" id="565050"/>
    <lineage>
        <taxon>Bacteria</taxon>
        <taxon>Pseudomonadati</taxon>
        <taxon>Pseudomonadota</taxon>
        <taxon>Alphaproteobacteria</taxon>
        <taxon>Caulobacterales</taxon>
        <taxon>Caulobacteraceae</taxon>
        <taxon>Caulobacter</taxon>
    </lineage>
</organism>